<proteinExistence type="inferred from homology"/>
<reference key="1">
    <citation type="journal article" date="2005" name="Arch. Microbiol.">
        <title>The genome sequence of an anaerobic aromatic-degrading denitrifying bacterium, strain EbN1.</title>
        <authorList>
            <person name="Rabus R."/>
            <person name="Kube M."/>
            <person name="Heider J."/>
            <person name="Beck A."/>
            <person name="Heitmann K."/>
            <person name="Widdel F."/>
            <person name="Reinhardt R."/>
        </authorList>
    </citation>
    <scope>NUCLEOTIDE SEQUENCE [LARGE SCALE GENOMIC DNA]</scope>
    <source>
        <strain>DSM 19018 / LMG 30748 / EbN1</strain>
    </source>
</reference>
<accession>Q5P796</accession>
<sequence>MSRPNSVRWLNEVQWDDQGLVPVIAQEAASGDVLMFAWMNREALQRTAETGEAIYWSRSRRRLWHKGEESGHIQKVLEIRLDCDSDVVLLKIEQIGGIACHTGRHSCFFQRYLADGSWETVDPVVKDPKDIYK</sequence>
<dbReference type="EC" id="3.5.4.19" evidence="1"/>
<dbReference type="EMBL" id="CR555306">
    <property type="protein sequence ID" value="CAI06815.1"/>
    <property type="molecule type" value="Genomic_DNA"/>
</dbReference>
<dbReference type="RefSeq" id="WP_011236543.1">
    <property type="nucleotide sequence ID" value="NC_006513.1"/>
</dbReference>
<dbReference type="SMR" id="Q5P796"/>
<dbReference type="STRING" id="76114.ebB39"/>
<dbReference type="KEGG" id="eba:ebB39"/>
<dbReference type="eggNOG" id="COG0139">
    <property type="taxonomic scope" value="Bacteria"/>
</dbReference>
<dbReference type="HOGENOM" id="CLU_048577_5_0_4"/>
<dbReference type="OrthoDB" id="9795769at2"/>
<dbReference type="UniPathway" id="UPA00031">
    <property type="reaction ID" value="UER00008"/>
</dbReference>
<dbReference type="Proteomes" id="UP000006552">
    <property type="component" value="Chromosome"/>
</dbReference>
<dbReference type="GO" id="GO:0005737">
    <property type="term" value="C:cytoplasm"/>
    <property type="evidence" value="ECO:0007669"/>
    <property type="project" value="UniProtKB-SubCell"/>
</dbReference>
<dbReference type="GO" id="GO:0000287">
    <property type="term" value="F:magnesium ion binding"/>
    <property type="evidence" value="ECO:0007669"/>
    <property type="project" value="UniProtKB-UniRule"/>
</dbReference>
<dbReference type="GO" id="GO:0004635">
    <property type="term" value="F:phosphoribosyl-AMP cyclohydrolase activity"/>
    <property type="evidence" value="ECO:0007669"/>
    <property type="project" value="UniProtKB-UniRule"/>
</dbReference>
<dbReference type="GO" id="GO:0008270">
    <property type="term" value="F:zinc ion binding"/>
    <property type="evidence" value="ECO:0007669"/>
    <property type="project" value="UniProtKB-UniRule"/>
</dbReference>
<dbReference type="GO" id="GO:0000105">
    <property type="term" value="P:L-histidine biosynthetic process"/>
    <property type="evidence" value="ECO:0007669"/>
    <property type="project" value="UniProtKB-UniRule"/>
</dbReference>
<dbReference type="FunFam" id="3.10.20.810:FF:000001">
    <property type="entry name" value="Histidine biosynthesis bifunctional protein HisIE"/>
    <property type="match status" value="1"/>
</dbReference>
<dbReference type="Gene3D" id="3.10.20.810">
    <property type="entry name" value="Phosphoribosyl-AMP cyclohydrolase"/>
    <property type="match status" value="1"/>
</dbReference>
<dbReference type="HAMAP" id="MF_01021">
    <property type="entry name" value="HisI"/>
    <property type="match status" value="1"/>
</dbReference>
<dbReference type="InterPro" id="IPR026660">
    <property type="entry name" value="PRA-CH"/>
</dbReference>
<dbReference type="InterPro" id="IPR002496">
    <property type="entry name" value="PRib_AMP_CycHydrolase_dom"/>
</dbReference>
<dbReference type="InterPro" id="IPR038019">
    <property type="entry name" value="PRib_AMP_CycHydrolase_sf"/>
</dbReference>
<dbReference type="NCBIfam" id="NF000768">
    <property type="entry name" value="PRK00051.1"/>
    <property type="match status" value="1"/>
</dbReference>
<dbReference type="PANTHER" id="PTHR42945">
    <property type="entry name" value="HISTIDINE BIOSYNTHESIS BIFUNCTIONAL PROTEIN"/>
    <property type="match status" value="1"/>
</dbReference>
<dbReference type="PANTHER" id="PTHR42945:SF1">
    <property type="entry name" value="HISTIDINE BIOSYNTHESIS BIFUNCTIONAL PROTEIN HIS7"/>
    <property type="match status" value="1"/>
</dbReference>
<dbReference type="Pfam" id="PF01502">
    <property type="entry name" value="PRA-CH"/>
    <property type="match status" value="1"/>
</dbReference>
<dbReference type="SUPFAM" id="SSF141734">
    <property type="entry name" value="HisI-like"/>
    <property type="match status" value="1"/>
</dbReference>
<keyword id="KW-0028">Amino-acid biosynthesis</keyword>
<keyword id="KW-0963">Cytoplasm</keyword>
<keyword id="KW-0368">Histidine biosynthesis</keyword>
<keyword id="KW-0378">Hydrolase</keyword>
<keyword id="KW-0460">Magnesium</keyword>
<keyword id="KW-0479">Metal-binding</keyword>
<keyword id="KW-1185">Reference proteome</keyword>
<keyword id="KW-0862">Zinc</keyword>
<feature type="chain" id="PRO_0000229808" description="Phosphoribosyl-AMP cyclohydrolase">
    <location>
        <begin position="1"/>
        <end position="133"/>
    </location>
</feature>
<feature type="binding site" evidence="1">
    <location>
        <position position="82"/>
    </location>
    <ligand>
        <name>Mg(2+)</name>
        <dbReference type="ChEBI" id="CHEBI:18420"/>
    </ligand>
</feature>
<feature type="binding site" evidence="1">
    <location>
        <position position="83"/>
    </location>
    <ligand>
        <name>Zn(2+)</name>
        <dbReference type="ChEBI" id="CHEBI:29105"/>
        <note>ligand shared between dimeric partners</note>
    </ligand>
</feature>
<feature type="binding site" evidence="1">
    <location>
        <position position="84"/>
    </location>
    <ligand>
        <name>Mg(2+)</name>
        <dbReference type="ChEBI" id="CHEBI:18420"/>
    </ligand>
</feature>
<feature type="binding site" evidence="1">
    <location>
        <position position="86"/>
    </location>
    <ligand>
        <name>Mg(2+)</name>
        <dbReference type="ChEBI" id="CHEBI:18420"/>
    </ligand>
</feature>
<feature type="binding site" evidence="1">
    <location>
        <position position="100"/>
    </location>
    <ligand>
        <name>Zn(2+)</name>
        <dbReference type="ChEBI" id="CHEBI:29105"/>
        <note>ligand shared between dimeric partners</note>
    </ligand>
</feature>
<feature type="binding site" evidence="1">
    <location>
        <position position="107"/>
    </location>
    <ligand>
        <name>Zn(2+)</name>
        <dbReference type="ChEBI" id="CHEBI:29105"/>
        <note>ligand shared between dimeric partners</note>
    </ligand>
</feature>
<protein>
    <recommendedName>
        <fullName evidence="1">Phosphoribosyl-AMP cyclohydrolase</fullName>
        <shortName evidence="1">PRA-CH</shortName>
        <ecNumber evidence="1">3.5.4.19</ecNumber>
    </recommendedName>
</protein>
<comment type="function">
    <text evidence="1">Catalyzes the hydrolysis of the adenine ring of phosphoribosyl-AMP.</text>
</comment>
<comment type="catalytic activity">
    <reaction evidence="1">
        <text>1-(5-phospho-beta-D-ribosyl)-5'-AMP + H2O = 1-(5-phospho-beta-D-ribosyl)-5-[(5-phospho-beta-D-ribosylamino)methylideneamino]imidazole-4-carboxamide</text>
        <dbReference type="Rhea" id="RHEA:20049"/>
        <dbReference type="ChEBI" id="CHEBI:15377"/>
        <dbReference type="ChEBI" id="CHEBI:58435"/>
        <dbReference type="ChEBI" id="CHEBI:59457"/>
        <dbReference type="EC" id="3.5.4.19"/>
    </reaction>
</comment>
<comment type="cofactor">
    <cofactor evidence="1">
        <name>Mg(2+)</name>
        <dbReference type="ChEBI" id="CHEBI:18420"/>
    </cofactor>
    <text evidence="1">Binds 1 Mg(2+) ion per subunit.</text>
</comment>
<comment type="cofactor">
    <cofactor evidence="1">
        <name>Zn(2+)</name>
        <dbReference type="ChEBI" id="CHEBI:29105"/>
    </cofactor>
    <text evidence="1">Binds 1 zinc ion per subunit.</text>
</comment>
<comment type="pathway">
    <text evidence="1">Amino-acid biosynthesis; L-histidine biosynthesis; L-histidine from 5-phospho-alpha-D-ribose 1-diphosphate: step 3/9.</text>
</comment>
<comment type="subunit">
    <text evidence="1">Homodimer.</text>
</comment>
<comment type="subcellular location">
    <subcellularLocation>
        <location evidence="1">Cytoplasm</location>
    </subcellularLocation>
</comment>
<comment type="similarity">
    <text evidence="1">Belongs to the PRA-CH family.</text>
</comment>
<organism>
    <name type="scientific">Aromatoleum aromaticum (strain DSM 19018 / LMG 30748 / EbN1)</name>
    <name type="common">Azoarcus sp. (strain EbN1)</name>
    <dbReference type="NCBI Taxonomy" id="76114"/>
    <lineage>
        <taxon>Bacteria</taxon>
        <taxon>Pseudomonadati</taxon>
        <taxon>Pseudomonadota</taxon>
        <taxon>Betaproteobacteria</taxon>
        <taxon>Rhodocyclales</taxon>
        <taxon>Rhodocyclaceae</taxon>
        <taxon>Aromatoleum</taxon>
    </lineage>
</organism>
<evidence type="ECO:0000255" key="1">
    <source>
        <dbReference type="HAMAP-Rule" id="MF_01021"/>
    </source>
</evidence>
<gene>
    <name evidence="1" type="primary">hisI</name>
    <name type="ordered locus">AZOSEA06920</name>
    <name type="ORF">ebB39</name>
</gene>
<name>HIS3_AROAE</name>